<sequence length="335" mass="38311">MKTQIINGVSLPNIPWQDKPADCKDVIWRYDANPIIPRDQLPTSNSIFNSAVVPYESEKGKFAGVFRVDDKCRNMELHAGFSKDGIHWDINPDRIVFEQAEKSTEEVNQWGYGYDPRVCFIEDRFWVTWCNAYGWKPTIGVAYTFDFKTFYQCENAFLPFNRNGVLFPRKINGKYVMFSRPSDSGHTPFGDMFISQSPDMKYWGEHRHVMGPLRAWESKKIGAGPIPIETSEGWLCFYHGVLESCNGFVYSFSACILDKDEPWKVKYRCAEYLLSPQKIYECVGDVQNVTFPCATLVDADTGRIAIYYGCADTCVSMAFTTVDDVVDYVKSHSSV</sequence>
<protein>
    <recommendedName>
        <fullName>Beta-1,4-mannooligosaccharide phosphorylase</fullName>
        <ecNumber>2.4.1.319</ecNumber>
    </recommendedName>
    <alternativeName>
        <fullName>RaMP2</fullName>
    </alternativeName>
</protein>
<organism>
    <name type="scientific">Ruminococcus albus (strain ATCC 27210 / DSM 20455 / JCM 14654 / NCDO 2250 / 7)</name>
    <dbReference type="NCBI Taxonomy" id="697329"/>
    <lineage>
        <taxon>Bacteria</taxon>
        <taxon>Bacillati</taxon>
        <taxon>Bacillota</taxon>
        <taxon>Clostridia</taxon>
        <taxon>Eubacteriales</taxon>
        <taxon>Oscillospiraceae</taxon>
        <taxon>Ruminococcus</taxon>
    </lineage>
</organism>
<gene>
    <name type="ordered locus">Rumal_0099</name>
</gene>
<name>MOSP_RUMA7</name>
<dbReference type="EC" id="2.4.1.319"/>
<dbReference type="EMBL" id="CP002403">
    <property type="protein sequence ID" value="ADU20661.1"/>
    <property type="molecule type" value="Genomic_DNA"/>
</dbReference>
<dbReference type="RefSeq" id="WP_013496855.1">
    <property type="nucleotide sequence ID" value="NC_014833.1"/>
</dbReference>
<dbReference type="PDB" id="5AYD">
    <property type="method" value="X-ray"/>
    <property type="resolution" value="2.30 A"/>
    <property type="chains" value="A/B/C/D/E/F=1-335"/>
</dbReference>
<dbReference type="PDB" id="5AYE">
    <property type="method" value="X-ray"/>
    <property type="resolution" value="2.20 A"/>
    <property type="chains" value="A/B/C/D/E/F=1-335"/>
</dbReference>
<dbReference type="PDBsum" id="5AYD"/>
<dbReference type="PDBsum" id="5AYE"/>
<dbReference type="SMR" id="E6UBR9"/>
<dbReference type="MINT" id="E6UBR9"/>
<dbReference type="STRING" id="697329.Rumal_0099"/>
<dbReference type="CAZy" id="GH130">
    <property type="family name" value="Glycoside Hydrolase Family 130"/>
</dbReference>
<dbReference type="KEGG" id="ral:Rumal_0099"/>
<dbReference type="eggNOG" id="COG2152">
    <property type="taxonomic scope" value="Bacteria"/>
</dbReference>
<dbReference type="HOGENOM" id="CLU_046648_0_0_9"/>
<dbReference type="OrthoDB" id="9759709at2"/>
<dbReference type="BioCyc" id="MetaCyc:MONOMER-18534"/>
<dbReference type="BRENDA" id="2.4.1.281">
    <property type="organism ID" value="5477"/>
</dbReference>
<dbReference type="BRENDA" id="2.4.1.319">
    <property type="organism ID" value="5477"/>
</dbReference>
<dbReference type="EvolutionaryTrace" id="E6UBR9"/>
<dbReference type="Proteomes" id="UP000006919">
    <property type="component" value="Chromosome"/>
</dbReference>
<dbReference type="GO" id="GO:0016757">
    <property type="term" value="F:glycosyltransferase activity"/>
    <property type="evidence" value="ECO:0007669"/>
    <property type="project" value="UniProtKB-KW"/>
</dbReference>
<dbReference type="GO" id="GO:0071555">
    <property type="term" value="P:cell wall organization"/>
    <property type="evidence" value="ECO:0007669"/>
    <property type="project" value="UniProtKB-KW"/>
</dbReference>
<dbReference type="CDD" id="cd08993">
    <property type="entry name" value="GH130"/>
    <property type="match status" value="1"/>
</dbReference>
<dbReference type="Gene3D" id="2.115.10.20">
    <property type="entry name" value="Glycosyl hydrolase domain, family 43"/>
    <property type="match status" value="1"/>
</dbReference>
<dbReference type="InterPro" id="IPR023296">
    <property type="entry name" value="Glyco_hydro_beta-prop_sf"/>
</dbReference>
<dbReference type="InterPro" id="IPR007184">
    <property type="entry name" value="Mannoside_phosphorylase"/>
</dbReference>
<dbReference type="PANTHER" id="PTHR34106:SF1">
    <property type="entry name" value="1,4-BETA-MANNOSYL-N-ACETYLGLUCOSAMINE PHOSPHORYLASE"/>
    <property type="match status" value="1"/>
</dbReference>
<dbReference type="PANTHER" id="PTHR34106">
    <property type="entry name" value="GLYCOSIDASE"/>
    <property type="match status" value="1"/>
</dbReference>
<dbReference type="Pfam" id="PF04041">
    <property type="entry name" value="Glyco_hydro_130"/>
    <property type="match status" value="1"/>
</dbReference>
<dbReference type="PIRSF" id="PIRSF016202">
    <property type="entry name" value="PH1107"/>
    <property type="match status" value="1"/>
</dbReference>
<dbReference type="SUPFAM" id="SSF75005">
    <property type="entry name" value="Arabinanase/levansucrase/invertase"/>
    <property type="match status" value="1"/>
</dbReference>
<keyword id="KW-0002">3D-structure</keyword>
<keyword id="KW-0119">Carbohydrate metabolism</keyword>
<keyword id="KW-0961">Cell wall biogenesis/degradation</keyword>
<keyword id="KW-0328">Glycosyltransferase</keyword>
<keyword id="KW-0808">Transferase</keyword>
<feature type="chain" id="PRO_0000421365" description="Beta-1,4-mannooligosaccharide phosphorylase">
    <location>
        <begin position="1"/>
        <end position="335"/>
    </location>
</feature>
<feature type="strand" evidence="4">
    <location>
        <begin position="5"/>
        <end position="7"/>
    </location>
</feature>
<feature type="strand" evidence="5">
    <location>
        <begin position="25"/>
        <end position="29"/>
    </location>
</feature>
<feature type="strand" evidence="5">
    <location>
        <begin position="44"/>
        <end position="57"/>
    </location>
</feature>
<feature type="strand" evidence="5">
    <location>
        <begin position="60"/>
        <end position="70"/>
    </location>
</feature>
<feature type="strand" evidence="5">
    <location>
        <begin position="75"/>
        <end position="87"/>
    </location>
</feature>
<feature type="strand" evidence="5">
    <location>
        <begin position="98"/>
        <end position="101"/>
    </location>
</feature>
<feature type="helix" evidence="5">
    <location>
        <begin position="102"/>
        <end position="104"/>
    </location>
</feature>
<feature type="turn" evidence="5">
    <location>
        <begin position="105"/>
        <end position="108"/>
    </location>
</feature>
<feature type="strand" evidence="5">
    <location>
        <begin position="113"/>
        <end position="121"/>
    </location>
</feature>
<feature type="strand" evidence="5">
    <location>
        <begin position="124"/>
        <end position="152"/>
    </location>
</feature>
<feature type="strand" evidence="5">
    <location>
        <begin position="159"/>
        <end position="166"/>
    </location>
</feature>
<feature type="strand" evidence="5">
    <location>
        <begin position="174"/>
        <end position="181"/>
    </location>
</feature>
<feature type="strand" evidence="5">
    <location>
        <begin position="184"/>
        <end position="186"/>
    </location>
</feature>
<feature type="strand" evidence="5">
    <location>
        <begin position="192"/>
        <end position="210"/>
    </location>
</feature>
<feature type="helix" evidence="5">
    <location>
        <begin position="215"/>
        <end position="217"/>
    </location>
</feature>
<feature type="strand" evidence="5">
    <location>
        <begin position="218"/>
        <end position="223"/>
    </location>
</feature>
<feature type="strand" evidence="5">
    <location>
        <begin position="228"/>
        <end position="230"/>
    </location>
</feature>
<feature type="strand" evidence="5">
    <location>
        <begin position="233"/>
        <end position="244"/>
    </location>
</feature>
<feature type="strand" evidence="5">
    <location>
        <begin position="247"/>
        <end position="257"/>
    </location>
</feature>
<feature type="strand" evidence="5">
    <location>
        <begin position="259"/>
        <end position="261"/>
    </location>
</feature>
<feature type="strand" evidence="5">
    <location>
        <begin position="264"/>
        <end position="271"/>
    </location>
</feature>
<feature type="helix" evidence="5">
    <location>
        <begin position="279"/>
        <end position="282"/>
    </location>
</feature>
<feature type="strand" evidence="5">
    <location>
        <begin position="283"/>
        <end position="298"/>
    </location>
</feature>
<feature type="turn" evidence="5">
    <location>
        <begin position="299"/>
        <end position="301"/>
    </location>
</feature>
<feature type="strand" evidence="5">
    <location>
        <begin position="303"/>
        <end position="310"/>
    </location>
</feature>
<feature type="turn" evidence="5">
    <location>
        <begin position="311"/>
        <end position="313"/>
    </location>
</feature>
<feature type="strand" evidence="5">
    <location>
        <begin position="314"/>
        <end position="321"/>
    </location>
</feature>
<feature type="helix" evidence="5">
    <location>
        <begin position="322"/>
        <end position="331"/>
    </location>
</feature>
<comment type="function">
    <text evidence="1">Catalyzes the phosphorolysis of beta-1,4-mannooligosaccharides to mannose 1-phosphate (Man1P) and shorter mannooligosaccharides. Can also catalyze the phosphorolysis of 4-O-beta-D-mannopyranosyl-D-glucopyranose (Man-Glc), but shows higher activity toward longer mannooligosaccharides. Involved in a mannan catabolic pathway which feeds into glycolysis.</text>
</comment>
<comment type="catalytic activity">
    <reaction evidence="1">
        <text>[(1-&gt;4)-beta-D-mannosyl](n) + phosphate = [(1-&gt;4)-beta-D-mannosyl](n-1) + alpha-D-mannose 1-phosphate</text>
        <dbReference type="Rhea" id="RHEA:45772"/>
        <dbReference type="Rhea" id="RHEA-COMP:11350"/>
        <dbReference type="Rhea" id="RHEA-COMP:11351"/>
        <dbReference type="ChEBI" id="CHEBI:27857"/>
        <dbReference type="ChEBI" id="CHEBI:43474"/>
        <dbReference type="ChEBI" id="CHEBI:58409"/>
        <dbReference type="EC" id="2.4.1.319"/>
    </reaction>
</comment>
<comment type="biophysicochemical properties">
    <kinetics>
        <KM evidence="1">28.4 mM for Man-Glc</KM>
        <KM evidence="1">44.5 mM for beta-1,4-mannobiose</KM>
        <KM evidence="1">7.94 mM for beta-1,4-mannotriose</KM>
        <KM evidence="1">3.21 mM for beta-1,4-mannotetraose</KM>
        <KM evidence="1">4.55 mM for beta-1,4-mannopentaose</KM>
        <text>kcat is 20.7 sec(-1) for Man-Glc. kcat is 7.06 sec(-1) for beta-1,4-mannobiose. kcat is 27.5 sec(-1) for beta-1,4-mannotriose. kcat is 33.1 sec(-1) for beta-1,4-mannotetraose. kcat is 31.9 sec(-1) for beta-1,4-mannopentaose.</text>
    </kinetics>
    <phDependence>
        <text evidence="1">Optimum pH is 6.5.</text>
    </phDependence>
    <temperatureDependence>
        <text evidence="1">Optimum temperature is 45 degrees Celsius.</text>
    </temperatureDependence>
</comment>
<comment type="subunit">
    <text evidence="1">Homohexamer in solution.</text>
</comment>
<comment type="miscellaneous">
    <text evidence="3">Both RaMP1 (Rumal_0852) and RaMP2 catalyze the phosphorolysis of a beta-1,4-mannosidic linkage at the non-reducing end of a substrate, but acceptor specificities are clearly different.</text>
</comment>
<comment type="similarity">
    <text evidence="2">Belongs to the glycosyl hydrolase 130 family.</text>
</comment>
<reference key="1">
    <citation type="journal article" date="2011" name="J. Bacteriol.">
        <title>Complete genome of the cellulolytic ruminal bacterium Ruminococcus albus 7.</title>
        <authorList>
            <person name="Suen G."/>
            <person name="Stevenson D.M."/>
            <person name="Bruce D.C."/>
            <person name="Chertkov O."/>
            <person name="Copeland A."/>
            <person name="Cheng J.F."/>
            <person name="Detter C."/>
            <person name="Detter J.C."/>
            <person name="Goodwin L.A."/>
            <person name="Han C.S."/>
            <person name="Hauser L.J."/>
            <person name="Ivanova N.N."/>
            <person name="Kyrpides N.C."/>
            <person name="Land M.L."/>
            <person name="Lapidus A."/>
            <person name="Lucas S."/>
            <person name="Ovchinnikova G."/>
            <person name="Pitluck S."/>
            <person name="Tapia R."/>
            <person name="Woyke T."/>
            <person name="Boyum J."/>
            <person name="Mead D."/>
            <person name="Weimer P.J."/>
        </authorList>
    </citation>
    <scope>NUCLEOTIDE SEQUENCE [LARGE SCALE GENOMIC DNA]</scope>
    <source>
        <strain>ATCC 27210 / DSM 20455 / JCM 14654 / NCDO 2250 / 7</strain>
    </source>
</reference>
<reference key="2">
    <citation type="journal article" date="2012" name="J. Biol. Chem.">
        <title>Metabolic mechanism of mannan in a ruminal bacterium, Ruminococcus albus, involving two mannoside phosphorylases and cellobiose 2-epimerase: discovery of a new carbohydrate phosphorylase, beta-1,4-mannooligosaccharide phosphorylase.</title>
        <authorList>
            <person name="Kawahara R."/>
            <person name="Saburi W."/>
            <person name="Odaka R."/>
            <person name="Taguchi H."/>
            <person name="Ito S."/>
            <person name="Mori H."/>
            <person name="Matsui H."/>
        </authorList>
    </citation>
    <scope>FUNCTION</scope>
    <scope>CATALYTIC ACTIVITY</scope>
    <scope>BIOPHYSICOCHEMICAL PROPERTIES</scope>
    <scope>SUBUNIT</scope>
    <source>
        <strain>NE1</strain>
    </source>
</reference>
<evidence type="ECO:0000269" key="1">
    <source>
    </source>
</evidence>
<evidence type="ECO:0000305" key="2"/>
<evidence type="ECO:0000305" key="3">
    <source>
    </source>
</evidence>
<evidence type="ECO:0007829" key="4">
    <source>
        <dbReference type="PDB" id="5AYD"/>
    </source>
</evidence>
<evidence type="ECO:0007829" key="5">
    <source>
        <dbReference type="PDB" id="5AYE"/>
    </source>
</evidence>
<accession>E6UBR9</accession>
<proteinExistence type="evidence at protein level"/>